<organismHost>
    <name type="scientific">Aves</name>
    <dbReference type="NCBI Taxonomy" id="8782"/>
</organismHost>
<organismHost>
    <name type="scientific">Equus caballus</name>
    <name type="common">Horse</name>
    <dbReference type="NCBI Taxonomy" id="9796"/>
</organismHost>
<feature type="chain" id="PRO_0000326307" description="Matrix protein 1">
    <location>
        <begin position="1"/>
        <end position="252"/>
    </location>
</feature>
<feature type="region of interest" description="Membrane-binding" evidence="1">
    <location>
        <begin position="1"/>
        <end position="164"/>
    </location>
</feature>
<feature type="region of interest" description="RNP-binding" evidence="1">
    <location>
        <begin position="165"/>
        <end position="252"/>
    </location>
</feature>
<feature type="short sequence motif" description="Nuclear localization signal" evidence="1">
    <location>
        <begin position="101"/>
        <end position="105"/>
    </location>
</feature>
<organism>
    <name type="scientific">Influenza A virus (strain A/Equine/New Market/1979 H3N8)</name>
    <dbReference type="NCBI Taxonomy" id="387226"/>
    <lineage>
        <taxon>Viruses</taxon>
        <taxon>Riboviria</taxon>
        <taxon>Orthornavirae</taxon>
        <taxon>Negarnaviricota</taxon>
        <taxon>Polyploviricotina</taxon>
        <taxon>Insthoviricetes</taxon>
        <taxon>Articulavirales</taxon>
        <taxon>Orthomyxoviridae</taxon>
        <taxon>Alphainfluenzavirus</taxon>
        <taxon>Alphainfluenzavirus influenzae</taxon>
        <taxon>Influenza A virus</taxon>
    </lineage>
</organism>
<protein>
    <recommendedName>
        <fullName evidence="1">Matrix protein 1</fullName>
        <shortName evidence="1">M1</shortName>
    </recommendedName>
</protein>
<reference key="1">
    <citation type="journal article" date="1998" name="Arch. Virol.">
        <title>Phylogenetic analyses of the matrix and non-structural genes of equine influenza viruses.</title>
        <authorList>
            <person name="Lindstrom S."/>
            <person name="Endo A."/>
            <person name="Sugita S."/>
            <person name="Pecoraro M."/>
            <person name="Hiromoto Y."/>
            <person name="Kamada M."/>
            <person name="Takahashi T."/>
            <person name="Nerome K."/>
        </authorList>
    </citation>
    <scope>NUCLEOTIDE SEQUENCE [GENOMIC RNA]</scope>
</reference>
<accession>Q77ZL4</accession>
<evidence type="ECO:0000255" key="1">
    <source>
        <dbReference type="HAMAP-Rule" id="MF_04068"/>
    </source>
</evidence>
<comment type="function">
    <text evidence="1">Plays critical roles in virus replication, from virus entry and uncoating to assembly and budding of the virus particle. M1 binding to ribonucleocapsids (RNPs) in nucleus seems to inhibit viral transcription. Interaction of viral NEP with M1-RNP is thought to promote nuclear export of the complex, which is targeted to the virion assembly site at the apical plasma membrane in polarized epithelial cells. Interactions with NA and HA may bring M1, a non-raft-associated protein, into lipid rafts. Forms a continuous shell on the inner side of the lipid bilayer in virion, where it binds the RNP. During virus entry into cell, the M2 ion channel acidifies the internal virion core, inducing M1 dissociation from the RNP. M1-free RNPs are transported to the nucleus, where viral transcription and replication can take place.</text>
</comment>
<comment type="function">
    <text evidence="1">Determines the virion's shape: spherical or filamentous. Clinical isolates of influenza are characterized by the presence of significant proportion of filamentous virions, whereas after multiple passage on eggs or cell culture, virions have only spherical morphology. Filamentous virions are thought to be important to infect neighboring cells, and spherical virions more suited to spread through aerosol between hosts organisms.</text>
</comment>
<comment type="subunit">
    <text evidence="1">Homodimer and homomultimer. Interacts with NEP. Binds ribonucleocapsid by both interacting with genomic RNA and NP protein. May interact with HA and NA. Cannot bind NP without genomic RNA.</text>
</comment>
<comment type="subcellular location">
    <subcellularLocation>
        <location evidence="1">Virion membrane</location>
        <topology evidence="1">Peripheral membrane protein</topology>
        <orientation evidence="1">Cytoplasmic side</orientation>
    </subcellularLocation>
    <subcellularLocation>
        <location evidence="1">Host nucleus</location>
    </subcellularLocation>
</comment>
<comment type="alternative products">
    <event type="alternative splicing"/>
    <isoform>
        <id>Q77ZL4-1</id>
        <name>M1</name>
        <sequence type="displayed"/>
    </isoform>
    <isoform>
        <id>Q77ZL5-1</id>
        <name>M2</name>
        <sequence type="external"/>
    </isoform>
    <text>Only the first 9 residues are shared by the 2 isoforms.</text>
</comment>
<comment type="miscellaneous">
    <text evidence="1">Most abundant protein in virion. When expressed alone can form virus-like particles in transfected cells.</text>
</comment>
<comment type="similarity">
    <text evidence="1">Belongs to the influenza viruses Matrix protein M1 family.</text>
</comment>
<keyword id="KW-0025">Alternative splicing</keyword>
<keyword id="KW-1048">Host nucleus</keyword>
<keyword id="KW-0472">Membrane</keyword>
<keyword id="KW-0694">RNA-binding</keyword>
<keyword id="KW-0468">Viral matrix protein</keyword>
<keyword id="KW-0946">Virion</keyword>
<proteinExistence type="inferred from homology"/>
<name>M1_I79A6</name>
<dbReference type="EMBL" id="AF001675">
    <property type="protein sequence ID" value="AAC31274.1"/>
    <property type="molecule type" value="Genomic_RNA"/>
</dbReference>
<dbReference type="SMR" id="Q77ZL4"/>
<dbReference type="GO" id="GO:0042025">
    <property type="term" value="C:host cell nucleus"/>
    <property type="evidence" value="ECO:0007669"/>
    <property type="project" value="UniProtKB-SubCell"/>
</dbReference>
<dbReference type="GO" id="GO:0016020">
    <property type="term" value="C:membrane"/>
    <property type="evidence" value="ECO:0007669"/>
    <property type="project" value="UniProtKB-KW"/>
</dbReference>
<dbReference type="GO" id="GO:0055036">
    <property type="term" value="C:virion membrane"/>
    <property type="evidence" value="ECO:0007669"/>
    <property type="project" value="UniProtKB-SubCell"/>
</dbReference>
<dbReference type="GO" id="GO:0003723">
    <property type="term" value="F:RNA binding"/>
    <property type="evidence" value="ECO:0007669"/>
    <property type="project" value="UniProtKB-UniRule"/>
</dbReference>
<dbReference type="GO" id="GO:0039660">
    <property type="term" value="F:structural constituent of virion"/>
    <property type="evidence" value="ECO:0007669"/>
    <property type="project" value="UniProtKB-UniRule"/>
</dbReference>
<dbReference type="GO" id="GO:0046761">
    <property type="term" value="P:viral budding from plasma membrane"/>
    <property type="evidence" value="ECO:0007669"/>
    <property type="project" value="UniProtKB-UniRule"/>
</dbReference>
<dbReference type="FunFam" id="1.10.10.180:FF:000001">
    <property type="entry name" value="Matrix protein 1"/>
    <property type="match status" value="1"/>
</dbReference>
<dbReference type="FunFam" id="1.20.91.10:FF:000001">
    <property type="entry name" value="Matrix protein 1"/>
    <property type="match status" value="1"/>
</dbReference>
<dbReference type="Gene3D" id="1.10.10.180">
    <property type="match status" value="1"/>
</dbReference>
<dbReference type="Gene3D" id="1.20.91.10">
    <property type="match status" value="1"/>
</dbReference>
<dbReference type="HAMAP" id="MF_04068">
    <property type="entry name" value="INFV_M1"/>
    <property type="match status" value="1"/>
</dbReference>
<dbReference type="InterPro" id="IPR036039">
    <property type="entry name" value="Flu_matrix_M1"/>
</dbReference>
<dbReference type="InterPro" id="IPR013188">
    <property type="entry name" value="Flu_matrix_M1_C"/>
</dbReference>
<dbReference type="InterPro" id="IPR001561">
    <property type="entry name" value="Flu_matrix_M1_N"/>
</dbReference>
<dbReference type="InterPro" id="IPR015423">
    <property type="entry name" value="Flu_matrix_M1_N_sub1"/>
</dbReference>
<dbReference type="InterPro" id="IPR015799">
    <property type="entry name" value="Flu_matrix_M1_N_sub2"/>
</dbReference>
<dbReference type="InterPro" id="IPR037533">
    <property type="entry name" value="INFV_M1"/>
</dbReference>
<dbReference type="Pfam" id="PF00598">
    <property type="entry name" value="Flu_M1"/>
    <property type="match status" value="1"/>
</dbReference>
<dbReference type="Pfam" id="PF08289">
    <property type="entry name" value="Flu_M1_C"/>
    <property type="match status" value="1"/>
</dbReference>
<dbReference type="SMART" id="SM00759">
    <property type="entry name" value="Flu_M1_C"/>
    <property type="match status" value="1"/>
</dbReference>
<dbReference type="SUPFAM" id="SSF48145">
    <property type="entry name" value="Influenza virus matrix protein M1"/>
    <property type="match status" value="1"/>
</dbReference>
<sequence>MSLLTEVETYVLSIVPSGPLKAEIAQRLEDVFAGKNTDLEALMEWLKTRPILSPLTKGILGFVFTLTVPSERGLQRRRFVQNALSGNGDPNNMDRAVKLYRKLKREITFHGAKEVALSYSTGALASCMGLIYNRMGTVTTEVAFGLVCATCEQIADSQHRSHRQMVTTTNPLIRHENRMVLASTTAKAMEQMAGSSEQAAEAMEVASKARQMVQAMRTIGTHPSSSAGLKDDLLENLQAYQKRMGVQMQRFK</sequence>
<gene>
    <name evidence="1" type="primary">M</name>
</gene>